<proteinExistence type="evidence at protein level"/>
<dbReference type="EC" id="5.5.1.12" evidence="4"/>
<dbReference type="EMBL" id="KU180500">
    <property type="protein sequence ID" value="APJ36372.1"/>
    <property type="molecule type" value="mRNA"/>
</dbReference>
<dbReference type="SMR" id="A0A1X9IRP7"/>
<dbReference type="UniPathway" id="UPA00213"/>
<dbReference type="GO" id="GO:0009507">
    <property type="term" value="C:chloroplast"/>
    <property type="evidence" value="ECO:0007669"/>
    <property type="project" value="UniProtKB-SubCell"/>
</dbReference>
<dbReference type="GO" id="GO:0050559">
    <property type="term" value="F:copalyl diphosphate synthase activity"/>
    <property type="evidence" value="ECO:0000314"/>
    <property type="project" value="UniProtKB"/>
</dbReference>
<dbReference type="GO" id="GO:0000287">
    <property type="term" value="F:magnesium ion binding"/>
    <property type="evidence" value="ECO:0007669"/>
    <property type="project" value="TreeGrafter"/>
</dbReference>
<dbReference type="GO" id="GO:0010333">
    <property type="term" value="F:terpene synthase activity"/>
    <property type="evidence" value="ECO:0007669"/>
    <property type="project" value="InterPro"/>
</dbReference>
<dbReference type="GO" id="GO:0009686">
    <property type="term" value="P:gibberellin biosynthetic process"/>
    <property type="evidence" value="ECO:0007669"/>
    <property type="project" value="TreeGrafter"/>
</dbReference>
<dbReference type="GO" id="GO:1901946">
    <property type="term" value="P:miltiradiene biosynthetic process"/>
    <property type="evidence" value="ECO:0000314"/>
    <property type="project" value="UniProtKB"/>
</dbReference>
<dbReference type="GO" id="GO:0016114">
    <property type="term" value="P:terpenoid biosynthetic process"/>
    <property type="evidence" value="ECO:0000314"/>
    <property type="project" value="UniProtKB"/>
</dbReference>
<dbReference type="FunFam" id="1.50.10.130:FF:000002">
    <property type="entry name" value="Ent-copalyl diphosphate synthase, chloroplastic"/>
    <property type="match status" value="1"/>
</dbReference>
<dbReference type="Gene3D" id="1.10.600.10">
    <property type="entry name" value="Farnesyl Diphosphate Synthase"/>
    <property type="match status" value="1"/>
</dbReference>
<dbReference type="Gene3D" id="1.50.10.130">
    <property type="entry name" value="Terpene synthase, N-terminal domain"/>
    <property type="match status" value="1"/>
</dbReference>
<dbReference type="InterPro" id="IPR008949">
    <property type="entry name" value="Isoprenoid_synthase_dom_sf"/>
</dbReference>
<dbReference type="InterPro" id="IPR001906">
    <property type="entry name" value="Terpene_synth_N"/>
</dbReference>
<dbReference type="InterPro" id="IPR036965">
    <property type="entry name" value="Terpene_synth_N_sf"/>
</dbReference>
<dbReference type="InterPro" id="IPR050148">
    <property type="entry name" value="Terpene_synthase-like"/>
</dbReference>
<dbReference type="InterPro" id="IPR008930">
    <property type="entry name" value="Terpenoid_cyclase/PrenylTrfase"/>
</dbReference>
<dbReference type="PANTHER" id="PTHR31739:SF30">
    <property type="entry name" value="COPAL-8-OL DIPHOSPHATE HYDRATASE, CHLOROPLASTIC"/>
    <property type="match status" value="1"/>
</dbReference>
<dbReference type="PANTHER" id="PTHR31739">
    <property type="entry name" value="ENT-COPALYL DIPHOSPHATE SYNTHASE, CHLOROPLASTIC"/>
    <property type="match status" value="1"/>
</dbReference>
<dbReference type="Pfam" id="PF01397">
    <property type="entry name" value="Terpene_synth"/>
    <property type="match status" value="1"/>
</dbReference>
<dbReference type="SUPFAM" id="SSF48239">
    <property type="entry name" value="Terpenoid cyclases/Protein prenyltransferases"/>
    <property type="match status" value="1"/>
</dbReference>
<dbReference type="SUPFAM" id="SSF48576">
    <property type="entry name" value="Terpenoid synthases"/>
    <property type="match status" value="1"/>
</dbReference>
<reference key="1">
    <citation type="journal article" date="2017" name="Plant Physiol.">
        <title>Functional diversification of kaurene synthase-like genes in Isodon rubescens.</title>
        <authorList>
            <person name="Jin B."/>
            <person name="Cui G."/>
            <person name="Guo J."/>
            <person name="Tang J."/>
            <person name="Duan L."/>
            <person name="Lin H."/>
            <person name="Shen Y."/>
            <person name="Chen T."/>
            <person name="Zhang H."/>
            <person name="Huang L."/>
        </authorList>
    </citation>
    <scope>NUCLEOTIDE SEQUENCE [MRNA]</scope>
    <scope>FUNCTION</scope>
    <scope>PATHWAY</scope>
    <scope>CATALYTIC ACTIVITY</scope>
    <scope>TISSUE SPECIFICITY</scope>
</reference>
<protein>
    <recommendedName>
        <fullName evidence="5">Copalyl diphosphate synthase 2, chloroplastic</fullName>
        <shortName evidence="5">IrCPS2</shortName>
        <ecNumber evidence="4">5.5.1.12</ecNumber>
    </recommendedName>
</protein>
<evidence type="ECO:0000250" key="1">
    <source>
        <dbReference type="UniProtKB" id="G8GJ96"/>
    </source>
</evidence>
<evidence type="ECO:0000250" key="2">
    <source>
        <dbReference type="UniProtKB" id="Q38802"/>
    </source>
</evidence>
<evidence type="ECO:0000250" key="3">
    <source>
        <dbReference type="UniProtKB" id="Q40577"/>
    </source>
</evidence>
<evidence type="ECO:0000269" key="4">
    <source>
    </source>
</evidence>
<evidence type="ECO:0000303" key="5">
    <source>
    </source>
</evidence>
<evidence type="ECO:0000305" key="6"/>
<organism>
    <name type="scientific">Isodon rubescens</name>
    <name type="common">Rabdosia rubescens</name>
    <dbReference type="NCBI Taxonomy" id="587669"/>
    <lineage>
        <taxon>Eukaryota</taxon>
        <taxon>Viridiplantae</taxon>
        <taxon>Streptophyta</taxon>
        <taxon>Embryophyta</taxon>
        <taxon>Tracheophyta</taxon>
        <taxon>Spermatophyta</taxon>
        <taxon>Magnoliopsida</taxon>
        <taxon>eudicotyledons</taxon>
        <taxon>Gunneridae</taxon>
        <taxon>Pentapetalae</taxon>
        <taxon>asterids</taxon>
        <taxon>lamiids</taxon>
        <taxon>Lamiales</taxon>
        <taxon>Lamiaceae</taxon>
        <taxon>Nepetoideae</taxon>
        <taxon>Ocimeae</taxon>
        <taxon>Isodoninae</taxon>
        <taxon>Isodon</taxon>
    </lineage>
</organism>
<feature type="chain" id="PRO_0000452373" description="Copalyl diphosphate synthase 2, chloroplastic">
    <location>
        <begin position="1" status="less than"/>
        <end position="419"/>
    </location>
</feature>
<feature type="binding site" evidence="2">
    <location>
        <position position="82"/>
    </location>
    <ligand>
        <name>substrate</name>
    </ligand>
</feature>
<feature type="non-terminal residue" evidence="6">
    <location>
        <position position="1"/>
    </location>
</feature>
<name>CPS2_ISORU</name>
<keyword id="KW-0150">Chloroplast</keyword>
<keyword id="KW-0413">Isomerase</keyword>
<keyword id="KW-0460">Magnesium</keyword>
<keyword id="KW-0479">Metal-binding</keyword>
<keyword id="KW-0934">Plastid</keyword>
<sequence length="419" mass="48375">MGIRLLKMHGYDVDPNALKHFKQEDGKFSCYGGQMIESASPIYNLYRASQLRFPGEEILEEATKFAYNFLQEKIANNQIQEKWVISEHLIDEIKLGLKMPWYATLPRVEAAYYLQYYAGTGDVWIGKTFYRMPEISNDTYKELAVLDFNRCQAQHQFEWIYMQEWYQSSSVKAFGISKKELLLAYFLAAATIFEPERTQERIMWAKTQIVSRMIKSFLSKENTLSLEQKTTLLIDFGHDINGLNKINSVEKGNGLAGTLLTTFQQLLEEFDRYTTHQLKNAWSQWFVKLQQGEGDGGADAELLANTLNICAGHIAFNEDILSHRDYTTLSSLTTKICQRLTQIQDKKILEIKDGSIKDKELEEEMQALVKLVLEENGGGIDRNIKQTFLSVFKTFYYCAYHHAETTDAHIFKVLFEPVV</sequence>
<accession>A0A1X9IRP7</accession>
<comment type="function">
    <text evidence="4">Involved in the biosynthesis of ent-kaurene diterpenoids natural products such as oridonin, miltiradiene, eriocalyxin B and nezukol, known to exhibit antitumor, anti-inflammatory and antibacterial activities (PubMed:28381502). Catalyzes the conversion of (2E,6E,10E)-geranylgeranyl diphosphate (GGPP) to (+)-copalyl diphosphate ((+)-CPP) (PubMed:28381502).</text>
</comment>
<comment type="catalytic activity">
    <reaction evidence="4">
        <text>(2E,6E,10E)-geranylgeranyl diphosphate = (+)-copalyl diphosphate</text>
        <dbReference type="Rhea" id="RHEA:24316"/>
        <dbReference type="ChEBI" id="CHEBI:58635"/>
        <dbReference type="ChEBI" id="CHEBI:58756"/>
        <dbReference type="EC" id="5.5.1.12"/>
    </reaction>
    <physiologicalReaction direction="left-to-right" evidence="4">
        <dbReference type="Rhea" id="RHEA:24317"/>
    </physiologicalReaction>
</comment>
<comment type="cofactor">
    <cofactor evidence="3">
        <name>Mg(2+)</name>
        <dbReference type="ChEBI" id="CHEBI:18420"/>
    </cofactor>
</comment>
<comment type="pathway">
    <text evidence="4">Secondary metabolite biosynthesis; terpenoid biosynthesis.</text>
</comment>
<comment type="subcellular location">
    <subcellularLocation>
        <location evidence="1">Plastid</location>
        <location evidence="1">Chloroplast</location>
    </subcellularLocation>
</comment>
<comment type="tissue specificity">
    <text evidence="4">Ubiquitous expression in roots, stems, leaves and flowers.</text>
</comment>
<comment type="miscellaneous">
    <text evidence="4">Abietane diterpenoids (e.g. miltiradiene, abietatriene and ferruginol) accumulate specifically in the periderm of roots (PubMed:28381502). The ent-kaurene diterpenoid oridonin, main constituent of Isodon rubescens, accumulates in leaves (PubMed:28381502).</text>
</comment>
<comment type="similarity">
    <text evidence="6">Belongs to the terpene synthase family. Tpsc subfamily.</text>
</comment>
<gene>
    <name evidence="5" type="primary">CPS2</name>
</gene>